<proteinExistence type="inferred from homology"/>
<comment type="function">
    <text evidence="1">Cell wall formation. Adds enolpyruvyl to UDP-N-acetylglucosamine.</text>
</comment>
<comment type="catalytic activity">
    <reaction evidence="1">
        <text>phosphoenolpyruvate + UDP-N-acetyl-alpha-D-glucosamine = UDP-N-acetyl-3-O-(1-carboxyvinyl)-alpha-D-glucosamine + phosphate</text>
        <dbReference type="Rhea" id="RHEA:18681"/>
        <dbReference type="ChEBI" id="CHEBI:43474"/>
        <dbReference type="ChEBI" id="CHEBI:57705"/>
        <dbReference type="ChEBI" id="CHEBI:58702"/>
        <dbReference type="ChEBI" id="CHEBI:68483"/>
        <dbReference type="EC" id="2.5.1.7"/>
    </reaction>
</comment>
<comment type="pathway">
    <text evidence="1">Cell wall biogenesis; peptidoglycan biosynthesis.</text>
</comment>
<comment type="subcellular location">
    <subcellularLocation>
        <location evidence="1">Cytoplasm</location>
    </subcellularLocation>
</comment>
<comment type="similarity">
    <text evidence="1">Belongs to the EPSP synthase family. MurA subfamily.</text>
</comment>
<name>MURA2_CARHZ</name>
<gene>
    <name evidence="1" type="primary">murA2</name>
    <name type="synonym">murA</name>
    <name type="ordered locus">CHY_2542</name>
</gene>
<evidence type="ECO:0000255" key="1">
    <source>
        <dbReference type="HAMAP-Rule" id="MF_00111"/>
    </source>
</evidence>
<organism>
    <name type="scientific">Carboxydothermus hydrogenoformans (strain ATCC BAA-161 / DSM 6008 / Z-2901)</name>
    <dbReference type="NCBI Taxonomy" id="246194"/>
    <lineage>
        <taxon>Bacteria</taxon>
        <taxon>Bacillati</taxon>
        <taxon>Bacillota</taxon>
        <taxon>Clostridia</taxon>
        <taxon>Thermoanaerobacterales</taxon>
        <taxon>Thermoanaerobacteraceae</taxon>
        <taxon>Carboxydothermus</taxon>
    </lineage>
</organism>
<protein>
    <recommendedName>
        <fullName evidence="1">UDP-N-acetylglucosamine 1-carboxyvinyltransferase 2</fullName>
        <ecNumber evidence="1">2.5.1.7</ecNumber>
    </recommendedName>
    <alternativeName>
        <fullName evidence="1">Enoylpyruvate transferase 2</fullName>
    </alternativeName>
    <alternativeName>
        <fullName evidence="1">UDP-N-acetylglucosamine enolpyruvyl transferase 2</fullName>
        <shortName evidence="1">EPT 2</shortName>
    </alternativeName>
</protein>
<reference key="1">
    <citation type="journal article" date="2005" name="PLoS Genet.">
        <title>Life in hot carbon monoxide: the complete genome sequence of Carboxydothermus hydrogenoformans Z-2901.</title>
        <authorList>
            <person name="Wu M."/>
            <person name="Ren Q."/>
            <person name="Durkin A.S."/>
            <person name="Daugherty S.C."/>
            <person name="Brinkac L.M."/>
            <person name="Dodson R.J."/>
            <person name="Madupu R."/>
            <person name="Sullivan S.A."/>
            <person name="Kolonay J.F."/>
            <person name="Nelson W.C."/>
            <person name="Tallon L.J."/>
            <person name="Jones K.M."/>
            <person name="Ulrich L.E."/>
            <person name="Gonzalez J.M."/>
            <person name="Zhulin I.B."/>
            <person name="Robb F.T."/>
            <person name="Eisen J.A."/>
        </authorList>
    </citation>
    <scope>NUCLEOTIDE SEQUENCE [LARGE SCALE GENOMIC DNA]</scope>
    <source>
        <strain>ATCC BAA-161 / DSM 6008 / Z-2901</strain>
    </source>
</reference>
<sequence>MEKFVIEGKQRLTGRVKISGAKNAALPILAGALLTGGTVRLTEVPELTDIYTMLEVLKALGAKVTFSEGEVVLHTPEITSAEAPYEQVRKMRASFLVMGPLLARTGRARISLPGGCAIGARPIDLHLKGFEALGAKIEMGHGFIEATAPRLKGTTVYLDFPSVGATENIMMAAVLAEGQTIIENAAEEPEIVDLANFLNNMGAKIKGAGTKVIRITGVKDLDGVNHTVIPDRIEAGTFMIGAVATQGEVIVENVITDHLTPLIAKLIEAGAEVIEDEDQNALLVRSNGKLKPLDIKTLPYPGFPTDLQAQMMALLATVPGISVVTETVFENRFMHVTELNRMGAKIRIEGRSAFIEGVESLTGARVKATDLRAGAALVIAGLVADGVTEVGHIFHIDRGYERFEEKLRGLGAKIERVSD</sequence>
<feature type="chain" id="PRO_0000231185" description="UDP-N-acetylglucosamine 1-carboxyvinyltransferase 2">
    <location>
        <begin position="1"/>
        <end position="419"/>
    </location>
</feature>
<feature type="active site" description="Proton donor" evidence="1">
    <location>
        <position position="116"/>
    </location>
</feature>
<feature type="binding site" evidence="1">
    <location>
        <begin position="22"/>
        <end position="23"/>
    </location>
    <ligand>
        <name>phosphoenolpyruvate</name>
        <dbReference type="ChEBI" id="CHEBI:58702"/>
    </ligand>
</feature>
<feature type="binding site" evidence="1">
    <location>
        <position position="92"/>
    </location>
    <ligand>
        <name>UDP-N-acetyl-alpha-D-glucosamine</name>
        <dbReference type="ChEBI" id="CHEBI:57705"/>
    </ligand>
</feature>
<feature type="binding site" evidence="1">
    <location>
        <begin position="121"/>
        <end position="125"/>
    </location>
    <ligand>
        <name>UDP-N-acetyl-alpha-D-glucosamine</name>
        <dbReference type="ChEBI" id="CHEBI:57705"/>
    </ligand>
</feature>
<feature type="binding site" evidence="1">
    <location>
        <position position="306"/>
    </location>
    <ligand>
        <name>UDP-N-acetyl-alpha-D-glucosamine</name>
        <dbReference type="ChEBI" id="CHEBI:57705"/>
    </ligand>
</feature>
<feature type="binding site" evidence="1">
    <location>
        <position position="328"/>
    </location>
    <ligand>
        <name>UDP-N-acetyl-alpha-D-glucosamine</name>
        <dbReference type="ChEBI" id="CHEBI:57705"/>
    </ligand>
</feature>
<feature type="modified residue" description="2-(S-cysteinyl)pyruvic acid O-phosphothioketal" evidence="1">
    <location>
        <position position="116"/>
    </location>
</feature>
<dbReference type="EC" id="2.5.1.7" evidence="1"/>
<dbReference type="EMBL" id="CP000141">
    <property type="protein sequence ID" value="ABB14095.1"/>
    <property type="molecule type" value="Genomic_DNA"/>
</dbReference>
<dbReference type="RefSeq" id="WP_011345408.1">
    <property type="nucleotide sequence ID" value="NC_007503.1"/>
</dbReference>
<dbReference type="SMR" id="Q3A949"/>
<dbReference type="FunCoup" id="Q3A949">
    <property type="interactions" value="325"/>
</dbReference>
<dbReference type="STRING" id="246194.CHY_2542"/>
<dbReference type="KEGG" id="chy:CHY_2542"/>
<dbReference type="eggNOG" id="COG0766">
    <property type="taxonomic scope" value="Bacteria"/>
</dbReference>
<dbReference type="HOGENOM" id="CLU_027387_0_0_9"/>
<dbReference type="InParanoid" id="Q3A949"/>
<dbReference type="OrthoDB" id="9803760at2"/>
<dbReference type="UniPathway" id="UPA00219"/>
<dbReference type="Proteomes" id="UP000002706">
    <property type="component" value="Chromosome"/>
</dbReference>
<dbReference type="GO" id="GO:0005737">
    <property type="term" value="C:cytoplasm"/>
    <property type="evidence" value="ECO:0007669"/>
    <property type="project" value="UniProtKB-SubCell"/>
</dbReference>
<dbReference type="GO" id="GO:0008760">
    <property type="term" value="F:UDP-N-acetylglucosamine 1-carboxyvinyltransferase activity"/>
    <property type="evidence" value="ECO:0007669"/>
    <property type="project" value="UniProtKB-UniRule"/>
</dbReference>
<dbReference type="GO" id="GO:0051301">
    <property type="term" value="P:cell division"/>
    <property type="evidence" value="ECO:0007669"/>
    <property type="project" value="UniProtKB-KW"/>
</dbReference>
<dbReference type="GO" id="GO:0071555">
    <property type="term" value="P:cell wall organization"/>
    <property type="evidence" value="ECO:0007669"/>
    <property type="project" value="UniProtKB-KW"/>
</dbReference>
<dbReference type="GO" id="GO:0009252">
    <property type="term" value="P:peptidoglycan biosynthetic process"/>
    <property type="evidence" value="ECO:0007669"/>
    <property type="project" value="UniProtKB-UniRule"/>
</dbReference>
<dbReference type="GO" id="GO:0008360">
    <property type="term" value="P:regulation of cell shape"/>
    <property type="evidence" value="ECO:0007669"/>
    <property type="project" value="UniProtKB-KW"/>
</dbReference>
<dbReference type="GO" id="GO:0019277">
    <property type="term" value="P:UDP-N-acetylgalactosamine biosynthetic process"/>
    <property type="evidence" value="ECO:0007669"/>
    <property type="project" value="InterPro"/>
</dbReference>
<dbReference type="CDD" id="cd01555">
    <property type="entry name" value="UdpNAET"/>
    <property type="match status" value="1"/>
</dbReference>
<dbReference type="FunFam" id="3.65.10.10:FF:000001">
    <property type="entry name" value="UDP-N-acetylglucosamine 1-carboxyvinyltransferase"/>
    <property type="match status" value="1"/>
</dbReference>
<dbReference type="Gene3D" id="3.65.10.10">
    <property type="entry name" value="Enolpyruvate transferase domain"/>
    <property type="match status" value="2"/>
</dbReference>
<dbReference type="HAMAP" id="MF_00111">
    <property type="entry name" value="MurA"/>
    <property type="match status" value="1"/>
</dbReference>
<dbReference type="InterPro" id="IPR001986">
    <property type="entry name" value="Enolpyruvate_Tfrase_dom"/>
</dbReference>
<dbReference type="InterPro" id="IPR036968">
    <property type="entry name" value="Enolpyruvate_Tfrase_sf"/>
</dbReference>
<dbReference type="InterPro" id="IPR050068">
    <property type="entry name" value="MurA_subfamily"/>
</dbReference>
<dbReference type="InterPro" id="IPR013792">
    <property type="entry name" value="RNA3'P_cycl/enolpyr_Trfase_a/b"/>
</dbReference>
<dbReference type="InterPro" id="IPR005750">
    <property type="entry name" value="UDP_GlcNAc_COvinyl_MurA"/>
</dbReference>
<dbReference type="NCBIfam" id="TIGR01072">
    <property type="entry name" value="murA"/>
    <property type="match status" value="1"/>
</dbReference>
<dbReference type="NCBIfam" id="NF006873">
    <property type="entry name" value="PRK09369.1"/>
    <property type="match status" value="1"/>
</dbReference>
<dbReference type="NCBIfam" id="NF009470">
    <property type="entry name" value="PRK12830.1"/>
    <property type="match status" value="1"/>
</dbReference>
<dbReference type="PANTHER" id="PTHR43783">
    <property type="entry name" value="UDP-N-ACETYLGLUCOSAMINE 1-CARBOXYVINYLTRANSFERASE"/>
    <property type="match status" value="1"/>
</dbReference>
<dbReference type="PANTHER" id="PTHR43783:SF1">
    <property type="entry name" value="UDP-N-ACETYLGLUCOSAMINE 1-CARBOXYVINYLTRANSFERASE"/>
    <property type="match status" value="1"/>
</dbReference>
<dbReference type="Pfam" id="PF00275">
    <property type="entry name" value="EPSP_synthase"/>
    <property type="match status" value="1"/>
</dbReference>
<dbReference type="SUPFAM" id="SSF55205">
    <property type="entry name" value="EPT/RTPC-like"/>
    <property type="match status" value="1"/>
</dbReference>
<accession>Q3A949</accession>
<keyword id="KW-0131">Cell cycle</keyword>
<keyword id="KW-0132">Cell division</keyword>
<keyword id="KW-0133">Cell shape</keyword>
<keyword id="KW-0961">Cell wall biogenesis/degradation</keyword>
<keyword id="KW-0963">Cytoplasm</keyword>
<keyword id="KW-0573">Peptidoglycan synthesis</keyword>
<keyword id="KW-0670">Pyruvate</keyword>
<keyword id="KW-1185">Reference proteome</keyword>
<keyword id="KW-0808">Transferase</keyword>